<protein>
    <recommendedName>
        <fullName evidence="1">Energy-coupling factor transporter ATP-binding protein EcfA1</fullName>
        <shortName evidence="1">ECF transporter A component EcfA1</shortName>
        <ecNumber evidence="1">7.-.-.-</ecNumber>
    </recommendedName>
</protein>
<reference key="1">
    <citation type="journal article" date="2002" name="Proc. Natl. Acad. Sci. U.S.A.">
        <title>Genome sequence of a serotype M3 strain of group A Streptococcus: phage-encoded toxins, the high-virulence phenotype, and clone emergence.</title>
        <authorList>
            <person name="Beres S.B."/>
            <person name="Sylva G.L."/>
            <person name="Barbian K.D."/>
            <person name="Lei B."/>
            <person name="Hoff J.S."/>
            <person name="Mammarella N.D."/>
            <person name="Liu M.-Y."/>
            <person name="Smoot J.C."/>
            <person name="Porcella S.F."/>
            <person name="Parkins L.D."/>
            <person name="Campbell D.S."/>
            <person name="Smith T.M."/>
            <person name="McCormick J.K."/>
            <person name="Leung D.Y.M."/>
            <person name="Schlievert P.M."/>
            <person name="Musser J.M."/>
        </authorList>
    </citation>
    <scope>NUCLEOTIDE SEQUENCE [LARGE SCALE GENOMIC DNA]</scope>
    <source>
        <strain>ATCC BAA-595 / MGAS315</strain>
    </source>
</reference>
<accession>P0CZ28</accession>
<accession>Q877W5</accession>
<accession>Q8K5H1</accession>
<evidence type="ECO:0000255" key="1">
    <source>
        <dbReference type="HAMAP-Rule" id="MF_01710"/>
    </source>
</evidence>
<organism>
    <name type="scientific">Streptococcus pyogenes serotype M3 (strain ATCC BAA-595 / MGAS315)</name>
    <dbReference type="NCBI Taxonomy" id="198466"/>
    <lineage>
        <taxon>Bacteria</taxon>
        <taxon>Bacillati</taxon>
        <taxon>Bacillota</taxon>
        <taxon>Bacilli</taxon>
        <taxon>Lactobacillales</taxon>
        <taxon>Streptococcaceae</taxon>
        <taxon>Streptococcus</taxon>
    </lineage>
</organism>
<sequence>MSAIIELKKVTFNYHKDQEKPTLDGVSFHVKQGEWLSIIGHNGSGKSTTIRLIDGLLEPESGSIIVDGDLLTITNVWEIRHKIGMVFQNPDNQFVGATVEDDVAFGLENKGIAHEDIKERVNHALELVGMQNFKEKEPARLSGGQKQRVAIAGAVAMKPKIIILDEATSMLDPKGRLELIKTIKNIRDDYQLTVISITHDLDEVALSDRVLVMKDGQVESTSTPEQLFARGDELLQLGLDIPFTTSVVQMLQEEGYPIDYGYLTEKELENQLCQLISKM</sequence>
<proteinExistence type="inferred from homology"/>
<dbReference type="EC" id="7.-.-.-" evidence="1"/>
<dbReference type="EMBL" id="AE014074">
    <property type="protein sequence ID" value="AAM80453.1"/>
    <property type="molecule type" value="Genomic_DNA"/>
</dbReference>
<dbReference type="RefSeq" id="WP_002992388.1">
    <property type="nucleotide sequence ID" value="NC_004070.1"/>
</dbReference>
<dbReference type="SMR" id="P0CZ28"/>
<dbReference type="KEGG" id="spg:SpyM3_1846"/>
<dbReference type="HOGENOM" id="CLU_000604_1_22_9"/>
<dbReference type="Proteomes" id="UP000000564">
    <property type="component" value="Chromosome"/>
</dbReference>
<dbReference type="GO" id="GO:0043190">
    <property type="term" value="C:ATP-binding cassette (ABC) transporter complex"/>
    <property type="evidence" value="ECO:0007669"/>
    <property type="project" value="TreeGrafter"/>
</dbReference>
<dbReference type="GO" id="GO:0005524">
    <property type="term" value="F:ATP binding"/>
    <property type="evidence" value="ECO:0007669"/>
    <property type="project" value="UniProtKB-KW"/>
</dbReference>
<dbReference type="GO" id="GO:0016887">
    <property type="term" value="F:ATP hydrolysis activity"/>
    <property type="evidence" value="ECO:0007669"/>
    <property type="project" value="InterPro"/>
</dbReference>
<dbReference type="GO" id="GO:0042626">
    <property type="term" value="F:ATPase-coupled transmembrane transporter activity"/>
    <property type="evidence" value="ECO:0007669"/>
    <property type="project" value="TreeGrafter"/>
</dbReference>
<dbReference type="CDD" id="cd03225">
    <property type="entry name" value="ABC_cobalt_CbiO_domain1"/>
    <property type="match status" value="1"/>
</dbReference>
<dbReference type="FunFam" id="3.40.50.300:FF:000224">
    <property type="entry name" value="Energy-coupling factor transporter ATP-binding protein EcfA"/>
    <property type="match status" value="1"/>
</dbReference>
<dbReference type="Gene3D" id="3.40.50.300">
    <property type="entry name" value="P-loop containing nucleotide triphosphate hydrolases"/>
    <property type="match status" value="1"/>
</dbReference>
<dbReference type="InterPro" id="IPR003593">
    <property type="entry name" value="AAA+_ATPase"/>
</dbReference>
<dbReference type="InterPro" id="IPR003439">
    <property type="entry name" value="ABC_transporter-like_ATP-bd"/>
</dbReference>
<dbReference type="InterPro" id="IPR017871">
    <property type="entry name" value="ABC_transporter-like_CS"/>
</dbReference>
<dbReference type="InterPro" id="IPR015856">
    <property type="entry name" value="ABC_transpr_CbiO/EcfA_su"/>
</dbReference>
<dbReference type="InterPro" id="IPR050095">
    <property type="entry name" value="ECF_ABC_transporter_ATP-bd"/>
</dbReference>
<dbReference type="InterPro" id="IPR030947">
    <property type="entry name" value="EcfA_1"/>
</dbReference>
<dbReference type="InterPro" id="IPR027417">
    <property type="entry name" value="P-loop_NTPase"/>
</dbReference>
<dbReference type="NCBIfam" id="TIGR04520">
    <property type="entry name" value="ECF_ATPase_1"/>
    <property type="match status" value="1"/>
</dbReference>
<dbReference type="NCBIfam" id="NF010156">
    <property type="entry name" value="PRK13635.1"/>
    <property type="match status" value="1"/>
</dbReference>
<dbReference type="NCBIfam" id="NF010167">
    <property type="entry name" value="PRK13648.1"/>
    <property type="match status" value="1"/>
</dbReference>
<dbReference type="PANTHER" id="PTHR43553:SF24">
    <property type="entry name" value="ENERGY-COUPLING FACTOR TRANSPORTER ATP-BINDING PROTEIN ECFA1"/>
    <property type="match status" value="1"/>
</dbReference>
<dbReference type="PANTHER" id="PTHR43553">
    <property type="entry name" value="HEAVY METAL TRANSPORTER"/>
    <property type="match status" value="1"/>
</dbReference>
<dbReference type="Pfam" id="PF00005">
    <property type="entry name" value="ABC_tran"/>
    <property type="match status" value="1"/>
</dbReference>
<dbReference type="SMART" id="SM00382">
    <property type="entry name" value="AAA"/>
    <property type="match status" value="1"/>
</dbReference>
<dbReference type="SUPFAM" id="SSF52540">
    <property type="entry name" value="P-loop containing nucleoside triphosphate hydrolases"/>
    <property type="match status" value="1"/>
</dbReference>
<dbReference type="PROSITE" id="PS00211">
    <property type="entry name" value="ABC_TRANSPORTER_1"/>
    <property type="match status" value="1"/>
</dbReference>
<dbReference type="PROSITE" id="PS50893">
    <property type="entry name" value="ABC_TRANSPORTER_2"/>
    <property type="match status" value="1"/>
</dbReference>
<dbReference type="PROSITE" id="PS51246">
    <property type="entry name" value="CBIO"/>
    <property type="match status" value="1"/>
</dbReference>
<name>ECFA1_STRP3</name>
<comment type="function">
    <text evidence="1">ATP-binding (A) component of a common energy-coupling factor (ECF) ABC-transporter complex. Unlike classic ABC transporters this ECF transporter provides the energy necessary to transport a number of different substrates.</text>
</comment>
<comment type="subunit">
    <text evidence="1">Forms a stable energy-coupling factor (ECF) transporter complex composed of 2 membrane-embedded substrate-binding proteins (S component), 2 ATP-binding proteins (A component) and 2 transmembrane proteins (T component).</text>
</comment>
<comment type="subcellular location">
    <subcellularLocation>
        <location evidence="1">Cell membrane</location>
        <topology evidence="1">Peripheral membrane protein</topology>
    </subcellularLocation>
</comment>
<comment type="similarity">
    <text evidence="1">Belongs to the ABC transporter superfamily. Energy-coupling factor EcfA family.</text>
</comment>
<gene>
    <name evidence="1" type="primary">ecfA1</name>
    <name type="synonym">cbiO1</name>
    <name type="ordered locus">SpyM3_1846</name>
</gene>
<keyword id="KW-0067">ATP-binding</keyword>
<keyword id="KW-1003">Cell membrane</keyword>
<keyword id="KW-0472">Membrane</keyword>
<keyword id="KW-0547">Nucleotide-binding</keyword>
<keyword id="KW-1278">Translocase</keyword>
<keyword id="KW-0813">Transport</keyword>
<feature type="chain" id="PRO_0000092108" description="Energy-coupling factor transporter ATP-binding protein EcfA1">
    <location>
        <begin position="1"/>
        <end position="279"/>
    </location>
</feature>
<feature type="domain" description="ABC transporter" evidence="1">
    <location>
        <begin position="5"/>
        <end position="240"/>
    </location>
</feature>
<feature type="binding site" evidence="1">
    <location>
        <begin position="40"/>
        <end position="47"/>
    </location>
    <ligand>
        <name>ATP</name>
        <dbReference type="ChEBI" id="CHEBI:30616"/>
    </ligand>
</feature>